<geneLocation type="plasmid" evidence="7 8">
    <name>pXAUT01</name>
</geneLocation>
<protein>
    <recommendedName>
        <fullName evidence="4">Pivalyl-CoA mutase small subunit</fullName>
        <shortName evidence="4">PCM small subunit</shortName>
        <ecNumber evidence="3">5.4.99.-</ecNumber>
    </recommendedName>
    <alternativeName>
        <fullName evidence="4">Pivalyl-CoA mutase, AdoCbl-binding subunit</fullName>
    </alternativeName>
</protein>
<name>PCMB_XANP2</name>
<dbReference type="EC" id="5.4.99.-" evidence="3"/>
<dbReference type="EMBL" id="CP000782">
    <property type="protein sequence ID" value="ABS70242.1"/>
    <property type="molecule type" value="Genomic_DNA"/>
</dbReference>
<dbReference type="SMR" id="A7IQE6"/>
<dbReference type="KEGG" id="xau:Xaut_5044"/>
<dbReference type="eggNOG" id="COG2185">
    <property type="taxonomic scope" value="Bacteria"/>
</dbReference>
<dbReference type="HOGENOM" id="CLU_128233_0_0_5"/>
<dbReference type="OrthoDB" id="9788468at2"/>
<dbReference type="PhylomeDB" id="A7IQE6"/>
<dbReference type="SABIO-RK" id="A7IQE6"/>
<dbReference type="Proteomes" id="UP000002417">
    <property type="component" value="Plasmid pXAUT01"/>
</dbReference>
<dbReference type="GO" id="GO:0031419">
    <property type="term" value="F:cobalamin binding"/>
    <property type="evidence" value="ECO:0000314"/>
    <property type="project" value="UniProtKB"/>
</dbReference>
<dbReference type="GO" id="GO:0046872">
    <property type="term" value="F:metal ion binding"/>
    <property type="evidence" value="ECO:0007669"/>
    <property type="project" value="UniProtKB-KW"/>
</dbReference>
<dbReference type="GO" id="GO:0034784">
    <property type="term" value="F:pivalyl-CoA mutase activity"/>
    <property type="evidence" value="ECO:0000314"/>
    <property type="project" value="UniProtKB"/>
</dbReference>
<dbReference type="GO" id="GO:0006637">
    <property type="term" value="P:acyl-CoA metabolic process"/>
    <property type="evidence" value="ECO:0000314"/>
    <property type="project" value="UniProtKB"/>
</dbReference>
<dbReference type="Gene3D" id="3.40.50.280">
    <property type="entry name" value="Cobalamin-binding domain"/>
    <property type="match status" value="1"/>
</dbReference>
<dbReference type="InterPro" id="IPR006159">
    <property type="entry name" value="Acid_CoA_mut_C"/>
</dbReference>
<dbReference type="InterPro" id="IPR006158">
    <property type="entry name" value="Cobalamin-bd"/>
</dbReference>
<dbReference type="InterPro" id="IPR036724">
    <property type="entry name" value="Cobalamin-bd_sf"/>
</dbReference>
<dbReference type="NCBIfam" id="TIGR00640">
    <property type="entry name" value="acid_CoA_mut_C"/>
    <property type="match status" value="1"/>
</dbReference>
<dbReference type="PANTHER" id="PTHR48101:SF1">
    <property type="entry name" value="METHYLMALONYL-COA MUTASE, LARGE SUBUNIT"/>
    <property type="match status" value="1"/>
</dbReference>
<dbReference type="PANTHER" id="PTHR48101">
    <property type="entry name" value="METHYLMALONYL-COA MUTASE, MITOCHONDRIAL-RELATED"/>
    <property type="match status" value="1"/>
</dbReference>
<dbReference type="Pfam" id="PF02310">
    <property type="entry name" value="B12-binding"/>
    <property type="match status" value="1"/>
</dbReference>
<dbReference type="SUPFAM" id="SSF52242">
    <property type="entry name" value="Cobalamin (vitamin B12)-binding domain"/>
    <property type="match status" value="1"/>
</dbReference>
<dbReference type="PROSITE" id="PS51332">
    <property type="entry name" value="B12_BINDING"/>
    <property type="match status" value="1"/>
</dbReference>
<feature type="chain" id="PRO_0000434611" description="Pivalyl-CoA mutase small subunit">
    <location>
        <begin position="1"/>
        <end position="148"/>
    </location>
</feature>
<feature type="domain" description="B12-binding" evidence="2">
    <location>
        <begin position="8"/>
        <end position="138"/>
    </location>
</feature>
<feature type="binding site" description="axial binding residue" evidence="1">
    <location>
        <position position="21"/>
    </location>
    <ligand>
        <name>adenosylcob(III)alamin</name>
        <dbReference type="ChEBI" id="CHEBI:18408"/>
    </ligand>
    <ligandPart>
        <name>Co</name>
        <dbReference type="ChEBI" id="CHEBI:27638"/>
    </ligandPart>
</feature>
<comment type="function">
    <text evidence="3">Together with Xaut_5043, catalyzes the reversible isomerization between pivalyl-CoA and isovaleryl-CoA, using radical chemistry. Does not exhibit isobutyryl-CoA mutase (ICM) activity.</text>
</comment>
<comment type="catalytic activity">
    <reaction evidence="3">
        <text>3-methylbutanoyl-CoA = 2,2-dimethylpropanoyl-CoA</text>
        <dbReference type="Rhea" id="RHEA:52620"/>
        <dbReference type="ChEBI" id="CHEBI:57345"/>
        <dbReference type="ChEBI" id="CHEBI:136712"/>
    </reaction>
</comment>
<comment type="cofactor">
    <cofactor evidence="3">
        <name>adenosylcob(III)alamin</name>
        <dbReference type="ChEBI" id="CHEBI:18408"/>
    </cofactor>
</comment>
<comment type="biophysicochemical properties">
    <kinetics>
        <text evidence="3">kcat is 14 min(-1) (measured in the presence of the small and large subunits).</text>
    </kinetics>
</comment>
<comment type="subunit">
    <text evidence="3">Monomer in the absence of the PCM large subunit. Weakly interacts with the PCM large subunit; an alpha(2)beta(2) stoichiometry seems to represent the active state of the enzyme.</text>
</comment>
<comment type="biotechnology">
    <text evidence="6">This enzyme and the derivative PCM-F, a variant in which the alpha and beta subunits are fused into a single polypeptide via a short 11-amino acid linker, have potential applications in bioremediation of pivalic acid found in sludge, in stereospecific synthesis of C5 carboxylic acids and alcohols, and in the production of potential commodity and specialty chemicals.</text>
</comment>
<comment type="similarity">
    <text evidence="5">Belongs to the acyl-CoA mutase small subunit family.</text>
</comment>
<organism>
    <name type="scientific">Xanthobacter autotrophicus (strain ATCC BAA-1158 / Py2)</name>
    <dbReference type="NCBI Taxonomy" id="78245"/>
    <lineage>
        <taxon>Bacteria</taxon>
        <taxon>Pseudomonadati</taxon>
        <taxon>Pseudomonadota</taxon>
        <taxon>Alphaproteobacteria</taxon>
        <taxon>Hyphomicrobiales</taxon>
        <taxon>Xanthobacteraceae</taxon>
        <taxon>Xanthobacter</taxon>
    </lineage>
</organism>
<reference key="1">
    <citation type="submission" date="2007-07" db="EMBL/GenBank/DDBJ databases">
        <title>Complete sequence of plasmid pXAUT01 of Xanthobacter autotrophicus Py2.</title>
        <authorList>
            <consortium name="US DOE Joint Genome Institute"/>
            <person name="Copeland A."/>
            <person name="Lucas S."/>
            <person name="Lapidus A."/>
            <person name="Barry K."/>
            <person name="Glavina del Rio T."/>
            <person name="Hammon N."/>
            <person name="Israni S."/>
            <person name="Dalin E."/>
            <person name="Tice H."/>
            <person name="Pitluck S."/>
            <person name="Sims D."/>
            <person name="Brettin T."/>
            <person name="Bruce D."/>
            <person name="Detter J.C."/>
            <person name="Han C."/>
            <person name="Tapia R."/>
            <person name="Brainard J."/>
            <person name="Schmutz J."/>
            <person name="Larimer F."/>
            <person name="Land M."/>
            <person name="Hauser L."/>
            <person name="Kyrpides N."/>
            <person name="Kim E."/>
            <person name="Ensigns S.A."/>
            <person name="Richardson P."/>
        </authorList>
    </citation>
    <scope>NUCLEOTIDE SEQUENCE [LARGE SCALE GENOMIC DNA]</scope>
    <source>
        <strain>ATCC BAA-1158 / Py2</strain>
    </source>
</reference>
<reference key="2">
    <citation type="journal article" date="2015" name="J. Biol. Chem.">
        <title>Engineered and native coenzyme B12-dependent isovaleryl-CoA/pivalyl-CoA mutase.</title>
        <authorList>
            <person name="Kitanishi K."/>
            <person name="Cracan V."/>
            <person name="Banerjee R."/>
        </authorList>
    </citation>
    <scope>FUNCTION</scope>
    <scope>CATALYTIC ACTIVITY</scope>
    <scope>SUBSTRATE SPECIFICITY</scope>
    <scope>BIOPHYSICOCHEMICAL PROPERTIES</scope>
    <scope>COFACTOR</scope>
    <scope>BIOTECHNOLOGY</scope>
    <scope>SUBUNIT</scope>
    <source>
        <strain>ATCC BAA-1158 / Py2</strain>
    </source>
</reference>
<keyword id="KW-0846">Cobalamin</keyword>
<keyword id="KW-0170">Cobalt</keyword>
<keyword id="KW-0413">Isomerase</keyword>
<keyword id="KW-0479">Metal-binding</keyword>
<keyword id="KW-0614">Plasmid</keyword>
<keyword id="KW-1185">Reference proteome</keyword>
<gene>
    <name evidence="7" type="ordered locus">Xaut_5044</name>
</gene>
<accession>A7IQE6</accession>
<sequence>MIHAGTRPLRVLVTKIGLDGHDRGSRIVAAYLRDAGMEVIYTPPWQTIPGVVKLATEEDVDVIGISSLATDHLIVPKMMEALRAAGLGHVGVVVGGIVPEAEQSALAAAGVSRVFGPGAAREEIVECVTALGQKSRAERVDDYSEANP</sequence>
<evidence type="ECO:0000250" key="1">
    <source>
        <dbReference type="UniProtKB" id="Q1LRY0"/>
    </source>
</evidence>
<evidence type="ECO:0000255" key="2">
    <source>
        <dbReference type="PROSITE-ProRule" id="PRU00666"/>
    </source>
</evidence>
<evidence type="ECO:0000269" key="3">
    <source>
    </source>
</evidence>
<evidence type="ECO:0000303" key="4">
    <source>
    </source>
</evidence>
<evidence type="ECO:0000305" key="5"/>
<evidence type="ECO:0000305" key="6">
    <source>
    </source>
</evidence>
<evidence type="ECO:0000312" key="7">
    <source>
        <dbReference type="EMBL" id="ABS70242.1"/>
    </source>
</evidence>
<evidence type="ECO:0000312" key="8">
    <source>
        <dbReference type="Proteomes" id="UP000002417"/>
    </source>
</evidence>
<proteinExistence type="evidence at protein level"/>